<reference evidence="7 9" key="1">
    <citation type="journal article" date="2003" name="Biochim. Biophys. Acta">
        <title>A novel Xenopus laevis SRY-related gene, xSox33.</title>
        <authorList>
            <person name="Hagiuda J."/>
            <person name="Hiraoka Y."/>
            <person name="Hasegawa M."/>
            <person name="Ogawa M."/>
            <person name="Aiso S."/>
        </authorList>
    </citation>
    <scope>NUCLEOTIDE SEQUENCE [MRNA]</scope>
    <scope>FUNCTION</scope>
    <scope>TISSUE SPECIFICITY</scope>
    <scope>DEVELOPMENTAL STAGE</scope>
</reference>
<reference evidence="8" key="2">
    <citation type="submission" date="2008-11" db="EMBL/GenBank/DDBJ databases">
        <authorList>
            <consortium name="NIH - Xenopus Gene Collection (XGC) project"/>
        </authorList>
    </citation>
    <scope>NUCLEOTIDE SEQUENCE [LARGE SCALE MRNA]</scope>
    <source>
        <tissue evidence="8">Oocyte</tissue>
    </source>
</reference>
<comment type="function">
    <text evidence="2 5">Transcription factor that binds to the sequence 5'-AACAAT-3' (PubMed:12890561). Acts as a transcriptional activator (By similarity).</text>
</comment>
<comment type="subcellular location">
    <subcellularLocation>
        <location evidence="1 3">Nucleus</location>
    </subcellularLocation>
</comment>
<comment type="tissue specificity">
    <text evidence="5">Expressed at a low level in embryos, and in the adult lung, ovary, skeletal muscle, testis, brain and heart.</text>
</comment>
<comment type="developmental stage">
    <text evidence="5">Zygotic expression begins after mid-blastula and expression levels rise gradually up to stage 41.</text>
</comment>
<gene>
    <name type="primary">sox12</name>
    <name evidence="9" type="synonym">sox-k1</name>
    <name evidence="8" type="synonym">sox-k1-a</name>
    <name evidence="6" type="synonym">sox33</name>
</gene>
<name>SOX12_XENLA</name>
<dbReference type="EMBL" id="AB086020">
    <property type="protein sequence ID" value="BAC41346.1"/>
    <property type="molecule type" value="mRNA"/>
</dbReference>
<dbReference type="EMBL" id="BC169671">
    <property type="protein sequence ID" value="AAI69671.1"/>
    <property type="molecule type" value="mRNA"/>
</dbReference>
<dbReference type="EMBL" id="BC169697">
    <property type="protein sequence ID" value="AAI69697.1"/>
    <property type="molecule type" value="mRNA"/>
</dbReference>
<dbReference type="RefSeq" id="NP_001079045.1">
    <property type="nucleotide sequence ID" value="NM_001085576.1"/>
</dbReference>
<dbReference type="RefSeq" id="XP_018092641.1">
    <property type="nucleotide sequence ID" value="XM_018237152.1"/>
</dbReference>
<dbReference type="SMR" id="Q8AXQ4"/>
<dbReference type="GeneID" id="373574"/>
<dbReference type="KEGG" id="xla:373574"/>
<dbReference type="AGR" id="Xenbase:XB-GENE-864958"/>
<dbReference type="CTD" id="373574"/>
<dbReference type="Xenbase" id="XB-GENE-864958">
    <property type="gene designation" value="sox12.S"/>
</dbReference>
<dbReference type="OMA" id="MHWGEEN"/>
<dbReference type="OrthoDB" id="6247875at2759"/>
<dbReference type="Proteomes" id="UP000186698">
    <property type="component" value="Chromosome 9_10S"/>
</dbReference>
<dbReference type="Bgee" id="373574">
    <property type="expression patterns" value="Expressed in internal ear and 7 other cell types or tissues"/>
</dbReference>
<dbReference type="GO" id="GO:0005634">
    <property type="term" value="C:nucleus"/>
    <property type="evidence" value="ECO:0000318"/>
    <property type="project" value="GO_Central"/>
</dbReference>
<dbReference type="GO" id="GO:0001228">
    <property type="term" value="F:DNA-binding transcription activator activity, RNA polymerase II-specific"/>
    <property type="evidence" value="ECO:0000318"/>
    <property type="project" value="GO_Central"/>
</dbReference>
<dbReference type="GO" id="GO:0003700">
    <property type="term" value="F:DNA-binding transcription factor activity"/>
    <property type="evidence" value="ECO:0000303"/>
    <property type="project" value="UniProtKB"/>
</dbReference>
<dbReference type="GO" id="GO:0000978">
    <property type="term" value="F:RNA polymerase II cis-regulatory region sequence-specific DNA binding"/>
    <property type="evidence" value="ECO:0000318"/>
    <property type="project" value="GO_Central"/>
</dbReference>
<dbReference type="GO" id="GO:0043565">
    <property type="term" value="F:sequence-specific DNA binding"/>
    <property type="evidence" value="ECO:0000314"/>
    <property type="project" value="UniProtKB"/>
</dbReference>
<dbReference type="GO" id="GO:0007420">
    <property type="term" value="P:brain development"/>
    <property type="evidence" value="ECO:0000318"/>
    <property type="project" value="GO_Central"/>
</dbReference>
<dbReference type="GO" id="GO:0048593">
    <property type="term" value="P:camera-type eye morphogenesis"/>
    <property type="evidence" value="ECO:0000318"/>
    <property type="project" value="GO_Central"/>
</dbReference>
<dbReference type="GO" id="GO:0000122">
    <property type="term" value="P:negative regulation of transcription by RNA polymerase II"/>
    <property type="evidence" value="ECO:0000318"/>
    <property type="project" value="GO_Central"/>
</dbReference>
<dbReference type="GO" id="GO:0030182">
    <property type="term" value="P:neuron differentiation"/>
    <property type="evidence" value="ECO:0000318"/>
    <property type="project" value="GO_Central"/>
</dbReference>
<dbReference type="GO" id="GO:0045591">
    <property type="term" value="P:positive regulation of regulatory T cell differentiation"/>
    <property type="evidence" value="ECO:0000250"/>
    <property type="project" value="UniProtKB"/>
</dbReference>
<dbReference type="GO" id="GO:0045944">
    <property type="term" value="P:positive regulation of transcription by RNA polymerase II"/>
    <property type="evidence" value="ECO:0000250"/>
    <property type="project" value="UniProtKB"/>
</dbReference>
<dbReference type="GO" id="GO:0006355">
    <property type="term" value="P:regulation of DNA-templated transcription"/>
    <property type="evidence" value="ECO:0000303"/>
    <property type="project" value="UniProtKB"/>
</dbReference>
<dbReference type="CDD" id="cd22029">
    <property type="entry name" value="HMG-box_SoxC"/>
    <property type="match status" value="1"/>
</dbReference>
<dbReference type="FunFam" id="1.10.30.10:FF:000007">
    <property type="entry name" value="Transcription factor SOX"/>
    <property type="match status" value="1"/>
</dbReference>
<dbReference type="Gene3D" id="1.10.30.10">
    <property type="entry name" value="High mobility group box domain"/>
    <property type="match status" value="1"/>
</dbReference>
<dbReference type="InterPro" id="IPR009071">
    <property type="entry name" value="HMG_box_dom"/>
</dbReference>
<dbReference type="InterPro" id="IPR036910">
    <property type="entry name" value="HMG_box_dom_sf"/>
</dbReference>
<dbReference type="InterPro" id="IPR017386">
    <property type="entry name" value="SOX-12/11/4"/>
</dbReference>
<dbReference type="InterPro" id="IPR050140">
    <property type="entry name" value="SRY-related_HMG-box_TF-like"/>
</dbReference>
<dbReference type="PANTHER" id="PTHR10270">
    <property type="entry name" value="SOX TRANSCRIPTION FACTOR"/>
    <property type="match status" value="1"/>
</dbReference>
<dbReference type="PANTHER" id="PTHR10270:SF325">
    <property type="entry name" value="TRANSCRIPTION FACTOR SOX-12"/>
    <property type="match status" value="1"/>
</dbReference>
<dbReference type="Pfam" id="PF00505">
    <property type="entry name" value="HMG_box"/>
    <property type="match status" value="1"/>
</dbReference>
<dbReference type="PIRSF" id="PIRSF038098">
    <property type="entry name" value="SOX-12/11/4a"/>
    <property type="match status" value="1"/>
</dbReference>
<dbReference type="SMART" id="SM00398">
    <property type="entry name" value="HMG"/>
    <property type="match status" value="1"/>
</dbReference>
<dbReference type="SUPFAM" id="SSF47095">
    <property type="entry name" value="HMG-box"/>
    <property type="match status" value="1"/>
</dbReference>
<dbReference type="PROSITE" id="PS50118">
    <property type="entry name" value="HMG_BOX_2"/>
    <property type="match status" value="1"/>
</dbReference>
<organism>
    <name type="scientific">Xenopus laevis</name>
    <name type="common">African clawed frog</name>
    <dbReference type="NCBI Taxonomy" id="8355"/>
    <lineage>
        <taxon>Eukaryota</taxon>
        <taxon>Metazoa</taxon>
        <taxon>Chordata</taxon>
        <taxon>Craniata</taxon>
        <taxon>Vertebrata</taxon>
        <taxon>Euteleostomi</taxon>
        <taxon>Amphibia</taxon>
        <taxon>Batrachia</taxon>
        <taxon>Anura</taxon>
        <taxon>Pipoidea</taxon>
        <taxon>Pipidae</taxon>
        <taxon>Xenopodinae</taxon>
        <taxon>Xenopus</taxon>
        <taxon>Xenopus</taxon>
    </lineage>
</organism>
<sequence>MVQNKTTGSCPKPTEVAPGGPSWCKTSNGHIKRPMNAFMVWSQIERRKLMSLCPNMHNADISRSLGQRWKLLQDTDKIPYVREAERLRLKHMADYPNYKYRPRRRSRTQESKTRARLPRSTATCQSVPSPCLSQMDTGSSMQWGETCPAWGGDQVGQSVETQIRESSARSPEVPTHTKTVPSSPQSAEEHEGLEGGSLVIPVDKEVPPHSGSHFEFPDHCTPEVMEMISGSGLLESVPDLVFSY</sequence>
<evidence type="ECO:0000250" key="1">
    <source>
        <dbReference type="UniProtKB" id="O15370"/>
    </source>
</evidence>
<evidence type="ECO:0000250" key="2">
    <source>
        <dbReference type="UniProtKB" id="Q04890"/>
    </source>
</evidence>
<evidence type="ECO:0000255" key="3">
    <source>
        <dbReference type="PROSITE-ProRule" id="PRU00267"/>
    </source>
</evidence>
<evidence type="ECO:0000256" key="4">
    <source>
        <dbReference type="SAM" id="MobiDB-lite"/>
    </source>
</evidence>
<evidence type="ECO:0000269" key="5">
    <source>
    </source>
</evidence>
<evidence type="ECO:0000303" key="6">
    <source>
    </source>
</evidence>
<evidence type="ECO:0000305" key="7"/>
<evidence type="ECO:0000312" key="8">
    <source>
        <dbReference type="EMBL" id="AAI69671.1"/>
    </source>
</evidence>
<evidence type="ECO:0000312" key="9">
    <source>
        <dbReference type="EMBL" id="BAC41346.1"/>
    </source>
</evidence>
<proteinExistence type="evidence at transcript level"/>
<keyword id="KW-0238">DNA-binding</keyword>
<keyword id="KW-0539">Nucleus</keyword>
<keyword id="KW-1185">Reference proteome</keyword>
<keyword id="KW-0804">Transcription</keyword>
<keyword id="KW-0805">Transcription regulation</keyword>
<protein>
    <recommendedName>
        <fullName>Transcription factor Sox-12</fullName>
    </recommendedName>
    <alternativeName>
        <fullName evidence="9">Sox-K1 protein</fullName>
        <shortName evidence="9">XSox-K1</shortName>
    </alternativeName>
    <alternativeName>
        <fullName>Transcription factor Sox-33</fullName>
        <shortName>xSox-33</shortName>
        <shortName evidence="6">xSox33</shortName>
    </alternativeName>
</protein>
<feature type="chain" id="PRO_0000370247" description="Transcription factor Sox-12">
    <location>
        <begin position="1"/>
        <end position="244"/>
    </location>
</feature>
<feature type="DNA-binding region" description="HMG box" evidence="3">
    <location>
        <begin position="31"/>
        <end position="99"/>
    </location>
</feature>
<feature type="region of interest" description="Disordered" evidence="4">
    <location>
        <begin position="1"/>
        <end position="22"/>
    </location>
</feature>
<feature type="region of interest" description="Disordered" evidence="4">
    <location>
        <begin position="101"/>
        <end position="137"/>
    </location>
</feature>
<feature type="region of interest" description="Disordered" evidence="4">
    <location>
        <begin position="152"/>
        <end position="193"/>
    </location>
</feature>
<feature type="compositionally biased region" description="Polar residues" evidence="4">
    <location>
        <begin position="120"/>
        <end position="137"/>
    </location>
</feature>
<feature type="compositionally biased region" description="Polar residues" evidence="4">
    <location>
        <begin position="176"/>
        <end position="186"/>
    </location>
</feature>
<accession>Q8AXQ4</accession>